<protein>
    <recommendedName>
        <fullName evidence="1">Pyridoxal kinase PdxY</fullName>
        <shortName evidence="1">PL kinase</shortName>
        <ecNumber evidence="1">2.7.1.35</ecNumber>
    </recommendedName>
</protein>
<dbReference type="EC" id="2.7.1.35" evidence="1"/>
<dbReference type="EMBL" id="CP001043">
    <property type="protein sequence ID" value="ACC70981.1"/>
    <property type="molecule type" value="Genomic_DNA"/>
</dbReference>
<dbReference type="RefSeq" id="WP_012401191.1">
    <property type="nucleotide sequence ID" value="NC_010622.1"/>
</dbReference>
<dbReference type="SMR" id="B2JCI0"/>
<dbReference type="STRING" id="391038.Bphy_1799"/>
<dbReference type="KEGG" id="bph:Bphy_1799"/>
<dbReference type="eggNOG" id="COG2240">
    <property type="taxonomic scope" value="Bacteria"/>
</dbReference>
<dbReference type="HOGENOM" id="CLU_046496_3_1_4"/>
<dbReference type="OrthoDB" id="9800808at2"/>
<dbReference type="UniPathway" id="UPA01068">
    <property type="reaction ID" value="UER00298"/>
</dbReference>
<dbReference type="Proteomes" id="UP000001192">
    <property type="component" value="Chromosome 1"/>
</dbReference>
<dbReference type="GO" id="GO:0005829">
    <property type="term" value="C:cytosol"/>
    <property type="evidence" value="ECO:0007669"/>
    <property type="project" value="TreeGrafter"/>
</dbReference>
<dbReference type="GO" id="GO:0005524">
    <property type="term" value="F:ATP binding"/>
    <property type="evidence" value="ECO:0007669"/>
    <property type="project" value="UniProtKB-UniRule"/>
</dbReference>
<dbReference type="GO" id="GO:0000287">
    <property type="term" value="F:magnesium ion binding"/>
    <property type="evidence" value="ECO:0007669"/>
    <property type="project" value="UniProtKB-UniRule"/>
</dbReference>
<dbReference type="GO" id="GO:0008478">
    <property type="term" value="F:pyridoxal kinase activity"/>
    <property type="evidence" value="ECO:0007669"/>
    <property type="project" value="UniProtKB-UniRule"/>
</dbReference>
<dbReference type="GO" id="GO:0009443">
    <property type="term" value="P:pyridoxal 5'-phosphate salvage"/>
    <property type="evidence" value="ECO:0007669"/>
    <property type="project" value="UniProtKB-UniRule"/>
</dbReference>
<dbReference type="CDD" id="cd01173">
    <property type="entry name" value="pyridoxal_pyridoxamine_kinase"/>
    <property type="match status" value="1"/>
</dbReference>
<dbReference type="FunFam" id="3.40.1190.20:FF:000008">
    <property type="entry name" value="Pyridoxal kinase PdxY"/>
    <property type="match status" value="1"/>
</dbReference>
<dbReference type="Gene3D" id="3.40.1190.20">
    <property type="match status" value="1"/>
</dbReference>
<dbReference type="HAMAP" id="MF_01639">
    <property type="entry name" value="PdxY"/>
    <property type="match status" value="1"/>
</dbReference>
<dbReference type="InterPro" id="IPR013749">
    <property type="entry name" value="PM/HMP-P_kinase-1"/>
</dbReference>
<dbReference type="InterPro" id="IPR004625">
    <property type="entry name" value="PyrdxlKinase"/>
</dbReference>
<dbReference type="InterPro" id="IPR023685">
    <property type="entry name" value="Pyridoxal_kinase_PdxY"/>
</dbReference>
<dbReference type="InterPro" id="IPR029056">
    <property type="entry name" value="Ribokinase-like"/>
</dbReference>
<dbReference type="NCBIfam" id="NF004398">
    <property type="entry name" value="PRK05756.1"/>
    <property type="match status" value="1"/>
</dbReference>
<dbReference type="NCBIfam" id="TIGR00687">
    <property type="entry name" value="pyridox_kin"/>
    <property type="match status" value="1"/>
</dbReference>
<dbReference type="PANTHER" id="PTHR10534">
    <property type="entry name" value="PYRIDOXAL KINASE"/>
    <property type="match status" value="1"/>
</dbReference>
<dbReference type="PANTHER" id="PTHR10534:SF2">
    <property type="entry name" value="PYRIDOXAL KINASE"/>
    <property type="match status" value="1"/>
</dbReference>
<dbReference type="Pfam" id="PF08543">
    <property type="entry name" value="Phos_pyr_kin"/>
    <property type="match status" value="1"/>
</dbReference>
<dbReference type="SUPFAM" id="SSF53613">
    <property type="entry name" value="Ribokinase-like"/>
    <property type="match status" value="1"/>
</dbReference>
<sequence>MKNVLSIQSHVVFGHAGNGASEFPMRRLGVNVWPLNTVQFSNHTQYGHWEGSAIDASQMLALVEGIGAIGMLPRCDAVLSGYLGTPEQAQAVIEIVRAVKAANPHALYFCDPVMGTATGYRVEPGIQEFLVRTMPEVSDVMCPNHSELQRLVGREIETVEEAVAACRELMKRGPKMVLVKHLLDRNSLADRFNMLVVTGREAWMGQRPLYPFARQPVGVGDMTSAVFVARTLLGDSVRSAFEHTLAAVNAVVRATWDAGRYELEIVAAQDDIARPRDWFDAWVVDPA</sequence>
<name>PDXY_PARP8</name>
<accession>B2JCI0</accession>
<evidence type="ECO:0000255" key="1">
    <source>
        <dbReference type="HAMAP-Rule" id="MF_01639"/>
    </source>
</evidence>
<proteinExistence type="inferred from homology"/>
<gene>
    <name evidence="1" type="primary">pdxY</name>
    <name type="ordered locus">Bphy_1799</name>
</gene>
<keyword id="KW-0067">ATP-binding</keyword>
<keyword id="KW-0418">Kinase</keyword>
<keyword id="KW-0460">Magnesium</keyword>
<keyword id="KW-0547">Nucleotide-binding</keyword>
<keyword id="KW-1185">Reference proteome</keyword>
<keyword id="KW-0808">Transferase</keyword>
<organism>
    <name type="scientific">Paraburkholderia phymatum (strain DSM 17167 / CIP 108236 / LMG 21445 / STM815)</name>
    <name type="common">Burkholderia phymatum</name>
    <dbReference type="NCBI Taxonomy" id="391038"/>
    <lineage>
        <taxon>Bacteria</taxon>
        <taxon>Pseudomonadati</taxon>
        <taxon>Pseudomonadota</taxon>
        <taxon>Betaproteobacteria</taxon>
        <taxon>Burkholderiales</taxon>
        <taxon>Burkholderiaceae</taxon>
        <taxon>Paraburkholderia</taxon>
    </lineage>
</organism>
<reference key="1">
    <citation type="journal article" date="2014" name="Stand. Genomic Sci.">
        <title>Complete genome sequence of Burkholderia phymatum STM815(T), a broad host range and efficient nitrogen-fixing symbiont of Mimosa species.</title>
        <authorList>
            <person name="Moulin L."/>
            <person name="Klonowska A."/>
            <person name="Caroline B."/>
            <person name="Booth K."/>
            <person name="Vriezen J.A."/>
            <person name="Melkonian R."/>
            <person name="James E.K."/>
            <person name="Young J.P."/>
            <person name="Bena G."/>
            <person name="Hauser L."/>
            <person name="Land M."/>
            <person name="Kyrpides N."/>
            <person name="Bruce D."/>
            <person name="Chain P."/>
            <person name="Copeland A."/>
            <person name="Pitluck S."/>
            <person name="Woyke T."/>
            <person name="Lizotte-Waniewski M."/>
            <person name="Bristow J."/>
            <person name="Riley M."/>
        </authorList>
    </citation>
    <scope>NUCLEOTIDE SEQUENCE [LARGE SCALE GENOMIC DNA]</scope>
    <source>
        <strain>DSM 17167 / CIP 108236 / LMG 21445 / STM815</strain>
    </source>
</reference>
<comment type="function">
    <text evidence="1">Pyridoxal kinase involved in the salvage pathway of pyridoxal 5'-phosphate (PLP). Catalyzes the phosphorylation of pyridoxal to PLP.</text>
</comment>
<comment type="catalytic activity">
    <reaction evidence="1">
        <text>pyridoxal + ATP = pyridoxal 5'-phosphate + ADP + H(+)</text>
        <dbReference type="Rhea" id="RHEA:10224"/>
        <dbReference type="ChEBI" id="CHEBI:15378"/>
        <dbReference type="ChEBI" id="CHEBI:17310"/>
        <dbReference type="ChEBI" id="CHEBI:30616"/>
        <dbReference type="ChEBI" id="CHEBI:456216"/>
        <dbReference type="ChEBI" id="CHEBI:597326"/>
        <dbReference type="EC" id="2.7.1.35"/>
    </reaction>
</comment>
<comment type="cofactor">
    <cofactor evidence="1">
        <name>Mg(2+)</name>
        <dbReference type="ChEBI" id="CHEBI:18420"/>
    </cofactor>
</comment>
<comment type="pathway">
    <text evidence="1">Cofactor metabolism; pyridoxal 5'-phosphate salvage; pyridoxal 5'-phosphate from pyridoxal: step 1/1.</text>
</comment>
<comment type="subunit">
    <text evidence="1">Homodimer.</text>
</comment>
<comment type="similarity">
    <text evidence="1">Belongs to the pyridoxine kinase family. PdxY subfamily.</text>
</comment>
<feature type="chain" id="PRO_1000186812" description="Pyridoxal kinase PdxY">
    <location>
        <begin position="1"/>
        <end position="287"/>
    </location>
</feature>
<feature type="binding site" evidence="1">
    <location>
        <position position="9"/>
    </location>
    <ligand>
        <name>substrate</name>
    </ligand>
</feature>
<feature type="binding site" evidence="1">
    <location>
        <begin position="44"/>
        <end position="45"/>
    </location>
    <ligand>
        <name>substrate</name>
    </ligand>
</feature>
<feature type="binding site" evidence="1">
    <location>
        <position position="111"/>
    </location>
    <ligand>
        <name>ATP</name>
        <dbReference type="ChEBI" id="CHEBI:30616"/>
    </ligand>
</feature>
<feature type="binding site" evidence="1">
    <location>
        <position position="147"/>
    </location>
    <ligand>
        <name>ATP</name>
        <dbReference type="ChEBI" id="CHEBI:30616"/>
    </ligand>
</feature>
<feature type="binding site" evidence="1">
    <location>
        <position position="180"/>
    </location>
    <ligand>
        <name>ATP</name>
        <dbReference type="ChEBI" id="CHEBI:30616"/>
    </ligand>
</feature>
<feature type="binding site" evidence="1">
    <location>
        <position position="221"/>
    </location>
    <ligand>
        <name>substrate</name>
    </ligand>
</feature>